<dbReference type="EC" id="2.7.2.3" evidence="1"/>
<dbReference type="EMBL" id="FM200053">
    <property type="protein sequence ID" value="CAR60980.1"/>
    <property type="molecule type" value="Genomic_DNA"/>
</dbReference>
<dbReference type="RefSeq" id="WP_000111274.1">
    <property type="nucleotide sequence ID" value="NC_011147.1"/>
</dbReference>
<dbReference type="SMR" id="B5BFN4"/>
<dbReference type="KEGG" id="sek:SSPA2739"/>
<dbReference type="HOGENOM" id="CLU_025427_0_2_6"/>
<dbReference type="UniPathway" id="UPA00109">
    <property type="reaction ID" value="UER00185"/>
</dbReference>
<dbReference type="Proteomes" id="UP000001869">
    <property type="component" value="Chromosome"/>
</dbReference>
<dbReference type="GO" id="GO:0005829">
    <property type="term" value="C:cytosol"/>
    <property type="evidence" value="ECO:0007669"/>
    <property type="project" value="TreeGrafter"/>
</dbReference>
<dbReference type="GO" id="GO:0043531">
    <property type="term" value="F:ADP binding"/>
    <property type="evidence" value="ECO:0007669"/>
    <property type="project" value="TreeGrafter"/>
</dbReference>
<dbReference type="GO" id="GO:0005524">
    <property type="term" value="F:ATP binding"/>
    <property type="evidence" value="ECO:0007669"/>
    <property type="project" value="UniProtKB-KW"/>
</dbReference>
<dbReference type="GO" id="GO:0004618">
    <property type="term" value="F:phosphoglycerate kinase activity"/>
    <property type="evidence" value="ECO:0007669"/>
    <property type="project" value="UniProtKB-UniRule"/>
</dbReference>
<dbReference type="GO" id="GO:0006094">
    <property type="term" value="P:gluconeogenesis"/>
    <property type="evidence" value="ECO:0007669"/>
    <property type="project" value="TreeGrafter"/>
</dbReference>
<dbReference type="GO" id="GO:0006096">
    <property type="term" value="P:glycolytic process"/>
    <property type="evidence" value="ECO:0007669"/>
    <property type="project" value="UniProtKB-UniRule"/>
</dbReference>
<dbReference type="FunFam" id="3.40.50.1260:FF:000001">
    <property type="entry name" value="Phosphoglycerate kinase"/>
    <property type="match status" value="1"/>
</dbReference>
<dbReference type="FunFam" id="3.40.50.1260:FF:000002">
    <property type="entry name" value="Phosphoglycerate kinase"/>
    <property type="match status" value="1"/>
</dbReference>
<dbReference type="Gene3D" id="3.40.50.1260">
    <property type="entry name" value="Phosphoglycerate kinase, N-terminal domain"/>
    <property type="match status" value="2"/>
</dbReference>
<dbReference type="HAMAP" id="MF_00145">
    <property type="entry name" value="Phosphoglyc_kinase"/>
    <property type="match status" value="1"/>
</dbReference>
<dbReference type="InterPro" id="IPR001576">
    <property type="entry name" value="Phosphoglycerate_kinase"/>
</dbReference>
<dbReference type="InterPro" id="IPR015911">
    <property type="entry name" value="Phosphoglycerate_kinase_CS"/>
</dbReference>
<dbReference type="InterPro" id="IPR015824">
    <property type="entry name" value="Phosphoglycerate_kinase_N"/>
</dbReference>
<dbReference type="InterPro" id="IPR036043">
    <property type="entry name" value="Phosphoglycerate_kinase_sf"/>
</dbReference>
<dbReference type="PANTHER" id="PTHR11406">
    <property type="entry name" value="PHOSPHOGLYCERATE KINASE"/>
    <property type="match status" value="1"/>
</dbReference>
<dbReference type="PANTHER" id="PTHR11406:SF23">
    <property type="entry name" value="PHOSPHOGLYCERATE KINASE 1, CHLOROPLASTIC-RELATED"/>
    <property type="match status" value="1"/>
</dbReference>
<dbReference type="Pfam" id="PF00162">
    <property type="entry name" value="PGK"/>
    <property type="match status" value="1"/>
</dbReference>
<dbReference type="PIRSF" id="PIRSF000724">
    <property type="entry name" value="Pgk"/>
    <property type="match status" value="1"/>
</dbReference>
<dbReference type="PRINTS" id="PR00477">
    <property type="entry name" value="PHGLYCKINASE"/>
</dbReference>
<dbReference type="SUPFAM" id="SSF53748">
    <property type="entry name" value="Phosphoglycerate kinase"/>
    <property type="match status" value="1"/>
</dbReference>
<dbReference type="PROSITE" id="PS00111">
    <property type="entry name" value="PGLYCERATE_KINASE"/>
    <property type="match status" value="1"/>
</dbReference>
<evidence type="ECO:0000255" key="1">
    <source>
        <dbReference type="HAMAP-Rule" id="MF_00145"/>
    </source>
</evidence>
<sequence>MSVIKMTDLDLAGKRVFIRADLNVPVKEGKVTSDARIRASLPTIELALKQGAKVMVTSHLGRPTEGEYNEEFSLLPVVNYLKDKLSNPVRLVKDYLDGVDVAEGELVVLENVRFNKGEKKDDEALSKKYAALCDVFVMDAFGTAHRAQASTHGIGKFADVACAGPLLAAELDALGKALKEPARPMVAIVGGSKVSTKLTVLDSLSKIADQLIVGGGIANTFVAAQGHSVGKSLYEADLVDEAKRLLTTCDIPVPTDVRVATEFSETAPATLKSVNDVKEDEQILDIGDASAQQLAEILKNAKTILWNGPVGVFEFPNFRKGTEIVANAIADSEAFSIAGGGDTLAAIDLFGIADKISYISTGGGAFLEFVEGKVLPAVAMLEERAKK</sequence>
<comment type="catalytic activity">
    <reaction evidence="1">
        <text>(2R)-3-phosphoglycerate + ATP = (2R)-3-phospho-glyceroyl phosphate + ADP</text>
        <dbReference type="Rhea" id="RHEA:14801"/>
        <dbReference type="ChEBI" id="CHEBI:30616"/>
        <dbReference type="ChEBI" id="CHEBI:57604"/>
        <dbReference type="ChEBI" id="CHEBI:58272"/>
        <dbReference type="ChEBI" id="CHEBI:456216"/>
        <dbReference type="EC" id="2.7.2.3"/>
    </reaction>
</comment>
<comment type="pathway">
    <text evidence="1">Carbohydrate degradation; glycolysis; pyruvate from D-glyceraldehyde 3-phosphate: step 2/5.</text>
</comment>
<comment type="subunit">
    <text evidence="1">Monomer.</text>
</comment>
<comment type="subcellular location">
    <subcellularLocation>
        <location evidence="1">Cytoplasm</location>
    </subcellularLocation>
</comment>
<comment type="similarity">
    <text evidence="1">Belongs to the phosphoglycerate kinase family.</text>
</comment>
<feature type="chain" id="PRO_1000096375" description="Phosphoglycerate kinase">
    <location>
        <begin position="1"/>
        <end position="387"/>
    </location>
</feature>
<feature type="binding site" evidence="1">
    <location>
        <begin position="21"/>
        <end position="23"/>
    </location>
    <ligand>
        <name>substrate</name>
    </ligand>
</feature>
<feature type="binding site" evidence="1">
    <location>
        <position position="36"/>
    </location>
    <ligand>
        <name>substrate</name>
    </ligand>
</feature>
<feature type="binding site" evidence="1">
    <location>
        <begin position="59"/>
        <end position="62"/>
    </location>
    <ligand>
        <name>substrate</name>
    </ligand>
</feature>
<feature type="binding site" evidence="1">
    <location>
        <position position="113"/>
    </location>
    <ligand>
        <name>substrate</name>
    </ligand>
</feature>
<feature type="binding site" evidence="1">
    <location>
        <position position="146"/>
    </location>
    <ligand>
        <name>substrate</name>
    </ligand>
</feature>
<feature type="binding site" evidence="1">
    <location>
        <position position="197"/>
    </location>
    <ligand>
        <name>ATP</name>
        <dbReference type="ChEBI" id="CHEBI:30616"/>
    </ligand>
</feature>
<feature type="binding site" evidence="1">
    <location>
        <position position="314"/>
    </location>
    <ligand>
        <name>ATP</name>
        <dbReference type="ChEBI" id="CHEBI:30616"/>
    </ligand>
</feature>
<feature type="binding site" evidence="1">
    <location>
        <begin position="340"/>
        <end position="343"/>
    </location>
    <ligand>
        <name>ATP</name>
        <dbReference type="ChEBI" id="CHEBI:30616"/>
    </ligand>
</feature>
<organism>
    <name type="scientific">Salmonella paratyphi A (strain AKU_12601)</name>
    <dbReference type="NCBI Taxonomy" id="554290"/>
    <lineage>
        <taxon>Bacteria</taxon>
        <taxon>Pseudomonadati</taxon>
        <taxon>Pseudomonadota</taxon>
        <taxon>Gammaproteobacteria</taxon>
        <taxon>Enterobacterales</taxon>
        <taxon>Enterobacteriaceae</taxon>
        <taxon>Salmonella</taxon>
    </lineage>
</organism>
<reference key="1">
    <citation type="journal article" date="2009" name="BMC Genomics">
        <title>Pseudogene accumulation in the evolutionary histories of Salmonella enterica serovars Paratyphi A and Typhi.</title>
        <authorList>
            <person name="Holt K.E."/>
            <person name="Thomson N.R."/>
            <person name="Wain J."/>
            <person name="Langridge G.C."/>
            <person name="Hasan R."/>
            <person name="Bhutta Z.A."/>
            <person name="Quail M.A."/>
            <person name="Norbertczak H."/>
            <person name="Walker D."/>
            <person name="Simmonds M."/>
            <person name="White B."/>
            <person name="Bason N."/>
            <person name="Mungall K."/>
            <person name="Dougan G."/>
            <person name="Parkhill J."/>
        </authorList>
    </citation>
    <scope>NUCLEOTIDE SEQUENCE [LARGE SCALE GENOMIC DNA]</scope>
    <source>
        <strain>AKU_12601</strain>
    </source>
</reference>
<accession>B5BFN4</accession>
<proteinExistence type="inferred from homology"/>
<name>PGK_SALPK</name>
<keyword id="KW-0067">ATP-binding</keyword>
<keyword id="KW-0963">Cytoplasm</keyword>
<keyword id="KW-0324">Glycolysis</keyword>
<keyword id="KW-0418">Kinase</keyword>
<keyword id="KW-0547">Nucleotide-binding</keyword>
<keyword id="KW-0808">Transferase</keyword>
<gene>
    <name evidence="1" type="primary">pgk</name>
    <name type="ordered locus">SSPA2739</name>
</gene>
<protein>
    <recommendedName>
        <fullName evidence="1">Phosphoglycerate kinase</fullName>
        <ecNumber evidence="1">2.7.2.3</ecNumber>
    </recommendedName>
</protein>